<protein>
    <recommendedName>
        <fullName>Galactosylgalactosylxylosylprotein 3-beta-glucuronosyltransferase 2</fullName>
        <ecNumber evidence="2">2.4.1.135</ecNumber>
    </recommendedName>
    <alternativeName>
        <fullName>Beta-1,3-glucuronyltransferase 2</fullName>
    </alternativeName>
    <alternativeName>
        <fullName>GlcAT-D</fullName>
    </alternativeName>
    <alternativeName>
        <fullName>UDP-glucuronosyltransferase S</fullName>
        <shortName>GlcAT-S</shortName>
        <shortName>Glucuronosyltransferase S</shortName>
    </alternativeName>
</protein>
<accession>P59270</accession>
<sequence>MKSALCSRFFILLPWILIVIIMLDVDPRRPAPQLTSRPYFSPHAVGCGGSRVPLRRSSPGRDAAEKRNESRPQLQPEPRLPTIYAITPTYSRPVQKAELTRLANTFRQVAQLHWILVEDRATRSELVSSFLARAGLPNTHLHVPTPRRYKRPWLPRATEQRNAGLAWLRQRHQHQSAQPGVLFFADDDNTYSLELFQEMRTTRKVSVWPVGLVGGRRYERPLVKNGKVVGWYTGWREDRPFAIDMAGFAVSLQVILSNPKAVFKRRGSQPGMQESDFLKQITTVEELEPKASNCTKVLVWHTRTEKVNLANEPKYHLDTVNIEV</sequence>
<reference key="1">
    <citation type="journal article" date="2002" name="Gene">
        <title>cDNA cloning, genomic structure and chromosomal mapping of the mouse glucuronyltransferase-S involved in the biosynthesis of the HNK-1 carbohydrate epitope.</title>
        <authorList>
            <person name="Imiya K."/>
            <person name="Ishizaki T."/>
            <person name="Seiki T."/>
            <person name="Saito F."/>
            <person name="Inazawa J."/>
            <person name="Oka S."/>
            <person name="Kawasaki T."/>
        </authorList>
    </citation>
    <scope>NUCLEOTIDE SEQUENCE [MRNA] (ISOFORM 1)</scope>
    <source>
        <strain>BALB/cJ</strain>
        <tissue>Brain</tissue>
    </source>
</reference>
<reference key="2">
    <citation type="journal article" date="2005" name="Science">
        <title>The transcriptional landscape of the mammalian genome.</title>
        <authorList>
            <person name="Carninci P."/>
            <person name="Kasukawa T."/>
            <person name="Katayama S."/>
            <person name="Gough J."/>
            <person name="Frith M.C."/>
            <person name="Maeda N."/>
            <person name="Oyama R."/>
            <person name="Ravasi T."/>
            <person name="Lenhard B."/>
            <person name="Wells C."/>
            <person name="Kodzius R."/>
            <person name="Shimokawa K."/>
            <person name="Bajic V.B."/>
            <person name="Brenner S.E."/>
            <person name="Batalov S."/>
            <person name="Forrest A.R."/>
            <person name="Zavolan M."/>
            <person name="Davis M.J."/>
            <person name="Wilming L.G."/>
            <person name="Aidinis V."/>
            <person name="Allen J.E."/>
            <person name="Ambesi-Impiombato A."/>
            <person name="Apweiler R."/>
            <person name="Aturaliya R.N."/>
            <person name="Bailey T.L."/>
            <person name="Bansal M."/>
            <person name="Baxter L."/>
            <person name="Beisel K.W."/>
            <person name="Bersano T."/>
            <person name="Bono H."/>
            <person name="Chalk A.M."/>
            <person name="Chiu K.P."/>
            <person name="Choudhary V."/>
            <person name="Christoffels A."/>
            <person name="Clutterbuck D.R."/>
            <person name="Crowe M.L."/>
            <person name="Dalla E."/>
            <person name="Dalrymple B.P."/>
            <person name="de Bono B."/>
            <person name="Della Gatta G."/>
            <person name="di Bernardo D."/>
            <person name="Down T."/>
            <person name="Engstrom P."/>
            <person name="Fagiolini M."/>
            <person name="Faulkner G."/>
            <person name="Fletcher C.F."/>
            <person name="Fukushima T."/>
            <person name="Furuno M."/>
            <person name="Futaki S."/>
            <person name="Gariboldi M."/>
            <person name="Georgii-Hemming P."/>
            <person name="Gingeras T.R."/>
            <person name="Gojobori T."/>
            <person name="Green R.E."/>
            <person name="Gustincich S."/>
            <person name="Harbers M."/>
            <person name="Hayashi Y."/>
            <person name="Hensch T.K."/>
            <person name="Hirokawa N."/>
            <person name="Hill D."/>
            <person name="Huminiecki L."/>
            <person name="Iacono M."/>
            <person name="Ikeo K."/>
            <person name="Iwama A."/>
            <person name="Ishikawa T."/>
            <person name="Jakt M."/>
            <person name="Kanapin A."/>
            <person name="Katoh M."/>
            <person name="Kawasawa Y."/>
            <person name="Kelso J."/>
            <person name="Kitamura H."/>
            <person name="Kitano H."/>
            <person name="Kollias G."/>
            <person name="Krishnan S.P."/>
            <person name="Kruger A."/>
            <person name="Kummerfeld S.K."/>
            <person name="Kurochkin I.V."/>
            <person name="Lareau L.F."/>
            <person name="Lazarevic D."/>
            <person name="Lipovich L."/>
            <person name="Liu J."/>
            <person name="Liuni S."/>
            <person name="McWilliam S."/>
            <person name="Madan Babu M."/>
            <person name="Madera M."/>
            <person name="Marchionni L."/>
            <person name="Matsuda H."/>
            <person name="Matsuzawa S."/>
            <person name="Miki H."/>
            <person name="Mignone F."/>
            <person name="Miyake S."/>
            <person name="Morris K."/>
            <person name="Mottagui-Tabar S."/>
            <person name="Mulder N."/>
            <person name="Nakano N."/>
            <person name="Nakauchi H."/>
            <person name="Ng P."/>
            <person name="Nilsson R."/>
            <person name="Nishiguchi S."/>
            <person name="Nishikawa S."/>
            <person name="Nori F."/>
            <person name="Ohara O."/>
            <person name="Okazaki Y."/>
            <person name="Orlando V."/>
            <person name="Pang K.C."/>
            <person name="Pavan W.J."/>
            <person name="Pavesi G."/>
            <person name="Pesole G."/>
            <person name="Petrovsky N."/>
            <person name="Piazza S."/>
            <person name="Reed J."/>
            <person name="Reid J.F."/>
            <person name="Ring B.Z."/>
            <person name="Ringwald M."/>
            <person name="Rost B."/>
            <person name="Ruan Y."/>
            <person name="Salzberg S.L."/>
            <person name="Sandelin A."/>
            <person name="Schneider C."/>
            <person name="Schoenbach C."/>
            <person name="Sekiguchi K."/>
            <person name="Semple C.A."/>
            <person name="Seno S."/>
            <person name="Sessa L."/>
            <person name="Sheng Y."/>
            <person name="Shibata Y."/>
            <person name="Shimada H."/>
            <person name="Shimada K."/>
            <person name="Silva D."/>
            <person name="Sinclair B."/>
            <person name="Sperling S."/>
            <person name="Stupka E."/>
            <person name="Sugiura K."/>
            <person name="Sultana R."/>
            <person name="Takenaka Y."/>
            <person name="Taki K."/>
            <person name="Tammoja K."/>
            <person name="Tan S.L."/>
            <person name="Tang S."/>
            <person name="Taylor M.S."/>
            <person name="Tegner J."/>
            <person name="Teichmann S.A."/>
            <person name="Ueda H.R."/>
            <person name="van Nimwegen E."/>
            <person name="Verardo R."/>
            <person name="Wei C.L."/>
            <person name="Yagi K."/>
            <person name="Yamanishi H."/>
            <person name="Zabarovsky E."/>
            <person name="Zhu S."/>
            <person name="Zimmer A."/>
            <person name="Hide W."/>
            <person name="Bult C."/>
            <person name="Grimmond S.M."/>
            <person name="Teasdale R.D."/>
            <person name="Liu E.T."/>
            <person name="Brusic V."/>
            <person name="Quackenbush J."/>
            <person name="Wahlestedt C."/>
            <person name="Mattick J.S."/>
            <person name="Hume D.A."/>
            <person name="Kai C."/>
            <person name="Sasaki D."/>
            <person name="Tomaru Y."/>
            <person name="Fukuda S."/>
            <person name="Kanamori-Katayama M."/>
            <person name="Suzuki M."/>
            <person name="Aoki J."/>
            <person name="Arakawa T."/>
            <person name="Iida J."/>
            <person name="Imamura K."/>
            <person name="Itoh M."/>
            <person name="Kato T."/>
            <person name="Kawaji H."/>
            <person name="Kawagashira N."/>
            <person name="Kawashima T."/>
            <person name="Kojima M."/>
            <person name="Kondo S."/>
            <person name="Konno H."/>
            <person name="Nakano K."/>
            <person name="Ninomiya N."/>
            <person name="Nishio T."/>
            <person name="Okada M."/>
            <person name="Plessy C."/>
            <person name="Shibata K."/>
            <person name="Shiraki T."/>
            <person name="Suzuki S."/>
            <person name="Tagami M."/>
            <person name="Waki K."/>
            <person name="Watahiki A."/>
            <person name="Okamura-Oho Y."/>
            <person name="Suzuki H."/>
            <person name="Kawai J."/>
            <person name="Hayashizaki Y."/>
        </authorList>
    </citation>
    <scope>NUCLEOTIDE SEQUENCE [LARGE SCALE MRNA] (ISOFORMS 1 AND 2)</scope>
    <source>
        <strain>C57BL/6J</strain>
        <tissue>Embryonic head</tissue>
        <tissue>Kidney</tissue>
    </source>
</reference>
<reference key="3">
    <citation type="journal article" date="2004" name="Genome Res.">
        <title>The status, quality, and expansion of the NIH full-length cDNA project: the Mammalian Gene Collection (MGC).</title>
        <authorList>
            <consortium name="The MGC Project Team"/>
        </authorList>
    </citation>
    <scope>NUCLEOTIDE SEQUENCE [LARGE SCALE MRNA] (ISOFORM 1)</scope>
    <source>
        <strain>C57BL/6J</strain>
        <tissue>Brain</tissue>
    </source>
</reference>
<organism>
    <name type="scientific">Mus musculus</name>
    <name type="common">Mouse</name>
    <dbReference type="NCBI Taxonomy" id="10090"/>
    <lineage>
        <taxon>Eukaryota</taxon>
        <taxon>Metazoa</taxon>
        <taxon>Chordata</taxon>
        <taxon>Craniata</taxon>
        <taxon>Vertebrata</taxon>
        <taxon>Euteleostomi</taxon>
        <taxon>Mammalia</taxon>
        <taxon>Eutheria</taxon>
        <taxon>Euarchontoglires</taxon>
        <taxon>Glires</taxon>
        <taxon>Rodentia</taxon>
        <taxon>Myomorpha</taxon>
        <taxon>Muroidea</taxon>
        <taxon>Muridae</taxon>
        <taxon>Murinae</taxon>
        <taxon>Mus</taxon>
        <taxon>Mus</taxon>
    </lineage>
</organism>
<comment type="function">
    <text>Involved in the biosynthesis of L2/HNK-1 carbohydrate epitope on both glycolipids and glycoproteins.</text>
</comment>
<comment type="catalytic activity">
    <reaction evidence="2">
        <text>3-O-(beta-D-galactosyl-(1-&gt;3)-beta-D-galactosyl-(1-&gt;4)-beta-D-xylosyl)-L-seryl-[protein] + UDP-alpha-D-glucuronate = 3-O-(beta-D-GlcA-(1-&gt;3)-beta-D-Gal-(1-&gt;3)-beta-D-Gal-(1-&gt;4)-beta-D-Xyl)-L-seryl-[protein] + UDP + H(+)</text>
        <dbReference type="Rhea" id="RHEA:24168"/>
        <dbReference type="Rhea" id="RHEA-COMP:12571"/>
        <dbReference type="Rhea" id="RHEA-COMP:12573"/>
        <dbReference type="ChEBI" id="CHEBI:15378"/>
        <dbReference type="ChEBI" id="CHEBI:58052"/>
        <dbReference type="ChEBI" id="CHEBI:58223"/>
        <dbReference type="ChEBI" id="CHEBI:132090"/>
        <dbReference type="ChEBI" id="CHEBI:132093"/>
        <dbReference type="EC" id="2.4.1.135"/>
    </reaction>
</comment>
<comment type="cofactor">
    <cofactor>
        <name>Mn(2+)</name>
        <dbReference type="ChEBI" id="CHEBI:29035"/>
    </cofactor>
</comment>
<comment type="pathway">
    <text>Protein modification; protein glycosylation.</text>
</comment>
<comment type="subunit">
    <text evidence="6">Homodimer.</text>
</comment>
<comment type="subcellular location">
    <subcellularLocation>
        <location evidence="1">Golgi apparatus membrane</location>
        <topology evidence="1">Single-pass type II membrane protein</topology>
    </subcellularLocation>
</comment>
<comment type="alternative products">
    <event type="alternative splicing"/>
    <isoform>
        <id>P59270-1</id>
        <name>1</name>
        <sequence type="displayed"/>
    </isoform>
    <isoform>
        <id>P59270-2</id>
        <name>2</name>
        <sequence type="described" ref="VSP_001796 VSP_001797"/>
    </isoform>
</comment>
<comment type="tissue specificity">
    <text>Expressed in brain, but not in liver and kidney.</text>
</comment>
<comment type="similarity">
    <text evidence="6">Belongs to the glycosyltransferase 43 family.</text>
</comment>
<evidence type="ECO:0000250" key="1"/>
<evidence type="ECO:0000250" key="2">
    <source>
        <dbReference type="UniProtKB" id="O35789"/>
    </source>
</evidence>
<evidence type="ECO:0000255" key="3"/>
<evidence type="ECO:0000256" key="4">
    <source>
        <dbReference type="SAM" id="MobiDB-lite"/>
    </source>
</evidence>
<evidence type="ECO:0000303" key="5">
    <source>
    </source>
</evidence>
<evidence type="ECO:0000305" key="6"/>
<name>B3GA2_MOUSE</name>
<dbReference type="EC" id="2.4.1.135" evidence="2"/>
<dbReference type="EMBL" id="AB055902">
    <property type="protein sequence ID" value="BAC20343.1"/>
    <property type="molecule type" value="mRNA"/>
</dbReference>
<dbReference type="EMBL" id="AK048146">
    <property type="protein sequence ID" value="BAC33257.1"/>
    <property type="molecule type" value="mRNA"/>
</dbReference>
<dbReference type="EMBL" id="AK052640">
    <property type="protein sequence ID" value="BAC35075.1"/>
    <property type="molecule type" value="mRNA"/>
</dbReference>
<dbReference type="EMBL" id="BC056368">
    <property type="protein sequence ID" value="AAH56368.1"/>
    <property type="molecule type" value="mRNA"/>
</dbReference>
<dbReference type="EMBL" id="BC058082">
    <property type="protein sequence ID" value="AAH58082.1"/>
    <property type="molecule type" value="mRNA"/>
</dbReference>
<dbReference type="CCDS" id="CCDS14850.1">
    <molecule id="P59270-1"/>
</dbReference>
<dbReference type="RefSeq" id="NP_742122.2">
    <molecule id="P59270-1"/>
    <property type="nucleotide sequence ID" value="NM_172124.2"/>
</dbReference>
<dbReference type="SMR" id="P59270"/>
<dbReference type="BioGRID" id="235032">
    <property type="interactions" value="1"/>
</dbReference>
<dbReference type="FunCoup" id="P59270">
    <property type="interactions" value="152"/>
</dbReference>
<dbReference type="STRING" id="10090.ENSMUSP00000066582"/>
<dbReference type="CAZy" id="GT43">
    <property type="family name" value="Glycosyltransferase Family 43"/>
</dbReference>
<dbReference type="GlyCosmos" id="P59270">
    <property type="glycosylation" value="2 sites, No reported glycans"/>
</dbReference>
<dbReference type="GlyGen" id="P59270">
    <property type="glycosylation" value="3 sites, 2 N-linked glycans (2 sites)"/>
</dbReference>
<dbReference type="PhosphoSitePlus" id="P59270"/>
<dbReference type="PaxDb" id="10090-ENSMUSP00000066582"/>
<dbReference type="ProteomicsDB" id="277142">
    <molecule id="P59270-1"/>
</dbReference>
<dbReference type="ProteomicsDB" id="277143">
    <molecule id="P59270-2"/>
</dbReference>
<dbReference type="Antibodypedia" id="2343">
    <property type="antibodies" value="77 antibodies from 18 providers"/>
</dbReference>
<dbReference type="DNASU" id="280645"/>
<dbReference type="Ensembl" id="ENSMUST00000063663.6">
    <molecule id="P59270-1"/>
    <property type="protein sequence ID" value="ENSMUSP00000066582.6"/>
    <property type="gene ID" value="ENSMUSG00000026156.9"/>
</dbReference>
<dbReference type="Ensembl" id="ENSMUST00000140583.2">
    <molecule id="P59270-2"/>
    <property type="protein sequence ID" value="ENSMUSP00000117089.2"/>
    <property type="gene ID" value="ENSMUSG00000026156.9"/>
</dbReference>
<dbReference type="GeneID" id="280645"/>
<dbReference type="KEGG" id="mmu:280645"/>
<dbReference type="UCSC" id="uc007amd.1">
    <molecule id="P59270-2"/>
    <property type="organism name" value="mouse"/>
</dbReference>
<dbReference type="UCSC" id="uc007ame.1">
    <molecule id="P59270-1"/>
    <property type="organism name" value="mouse"/>
</dbReference>
<dbReference type="AGR" id="MGI:2389490"/>
<dbReference type="CTD" id="135152"/>
<dbReference type="MGI" id="MGI:2389490">
    <property type="gene designation" value="B3gat2"/>
</dbReference>
<dbReference type="VEuPathDB" id="HostDB:ENSMUSG00000026156"/>
<dbReference type="eggNOG" id="KOG1476">
    <property type="taxonomic scope" value="Eukaryota"/>
</dbReference>
<dbReference type="GeneTree" id="ENSGT00940000159583"/>
<dbReference type="HOGENOM" id="CLU_045177_2_0_1"/>
<dbReference type="InParanoid" id="P59270"/>
<dbReference type="OMA" id="RNVALAW"/>
<dbReference type="OrthoDB" id="675023at2759"/>
<dbReference type="PhylomeDB" id="P59270"/>
<dbReference type="TreeFam" id="TF313522"/>
<dbReference type="Reactome" id="R-MMU-1971475">
    <property type="pathway name" value="A tetrasaccharide linker sequence is required for GAG synthesis"/>
</dbReference>
<dbReference type="UniPathway" id="UPA00378"/>
<dbReference type="BioGRID-ORCS" id="280645">
    <property type="hits" value="3 hits in 75 CRISPR screens"/>
</dbReference>
<dbReference type="ChiTaRS" id="B3gat2">
    <property type="organism name" value="mouse"/>
</dbReference>
<dbReference type="PRO" id="PR:P59270"/>
<dbReference type="Proteomes" id="UP000000589">
    <property type="component" value="Chromosome 1"/>
</dbReference>
<dbReference type="RNAct" id="P59270">
    <property type="molecule type" value="protein"/>
</dbReference>
<dbReference type="Bgee" id="ENSMUSG00000026156">
    <property type="expression patterns" value="Expressed in cortical plate and 71 other cell types or tissues"/>
</dbReference>
<dbReference type="ExpressionAtlas" id="P59270">
    <property type="expression patterns" value="baseline and differential"/>
</dbReference>
<dbReference type="GO" id="GO:0000139">
    <property type="term" value="C:Golgi membrane"/>
    <property type="evidence" value="ECO:0007669"/>
    <property type="project" value="UniProtKB-SubCell"/>
</dbReference>
<dbReference type="GO" id="GO:0015018">
    <property type="term" value="F:galactosylgalactosylxylosylprotein 3-beta-glucuronosyltransferase activity"/>
    <property type="evidence" value="ECO:0000250"/>
    <property type="project" value="UniProtKB"/>
</dbReference>
<dbReference type="GO" id="GO:0046872">
    <property type="term" value="F:metal ion binding"/>
    <property type="evidence" value="ECO:0007669"/>
    <property type="project" value="UniProtKB-KW"/>
</dbReference>
<dbReference type="GO" id="GO:0016051">
    <property type="term" value="P:carbohydrate biosynthetic process"/>
    <property type="evidence" value="ECO:0007669"/>
    <property type="project" value="Ensembl"/>
</dbReference>
<dbReference type="GO" id="GO:0006486">
    <property type="term" value="P:protein glycosylation"/>
    <property type="evidence" value="ECO:0007669"/>
    <property type="project" value="UniProtKB-UniPathway"/>
</dbReference>
<dbReference type="CDD" id="cd00218">
    <property type="entry name" value="GlcAT-I"/>
    <property type="match status" value="1"/>
</dbReference>
<dbReference type="FunFam" id="3.90.550.10:FF:000010">
    <property type="entry name" value="Galactosylgalactosylxylosylprotein 3-beta-glucuronosyltransferase"/>
    <property type="match status" value="1"/>
</dbReference>
<dbReference type="Gene3D" id="3.90.550.10">
    <property type="entry name" value="Spore Coat Polysaccharide Biosynthesis Protein SpsA, Chain A"/>
    <property type="match status" value="1"/>
</dbReference>
<dbReference type="InterPro" id="IPR005027">
    <property type="entry name" value="Glyco_trans_43"/>
</dbReference>
<dbReference type="InterPro" id="IPR029044">
    <property type="entry name" value="Nucleotide-diphossugar_trans"/>
</dbReference>
<dbReference type="PANTHER" id="PTHR10896:SF8">
    <property type="entry name" value="GALACTOSYLGALACTOSYLXYLOSYLPROTEIN 3-BETA-GLUCURONOSYLTRANSFERASE 2"/>
    <property type="match status" value="1"/>
</dbReference>
<dbReference type="PANTHER" id="PTHR10896">
    <property type="entry name" value="GALACTOSYLGALACTOSYLXYLOSYLPROTEIN 3-BETA-GLUCURONOSYLTRANSFERASE BETA-1,3-GLUCURONYLTRANSFERASE"/>
    <property type="match status" value="1"/>
</dbReference>
<dbReference type="Pfam" id="PF03360">
    <property type="entry name" value="Glyco_transf_43"/>
    <property type="match status" value="1"/>
</dbReference>
<dbReference type="SUPFAM" id="SSF53448">
    <property type="entry name" value="Nucleotide-diphospho-sugar transferases"/>
    <property type="match status" value="1"/>
</dbReference>
<keyword id="KW-0025">Alternative splicing</keyword>
<keyword id="KW-0325">Glycoprotein</keyword>
<keyword id="KW-0333">Golgi apparatus</keyword>
<keyword id="KW-0464">Manganese</keyword>
<keyword id="KW-0472">Membrane</keyword>
<keyword id="KW-0479">Metal-binding</keyword>
<keyword id="KW-1185">Reference proteome</keyword>
<keyword id="KW-0735">Signal-anchor</keyword>
<keyword id="KW-0808">Transferase</keyword>
<keyword id="KW-0812">Transmembrane</keyword>
<keyword id="KW-1133">Transmembrane helix</keyword>
<feature type="chain" id="PRO_0000195173" description="Galactosylgalactosylxylosylprotein 3-beta-glucuronosyltransferase 2">
    <location>
        <begin position="1"/>
        <end position="324"/>
    </location>
</feature>
<feature type="topological domain" description="Cytoplasmic" evidence="3">
    <location>
        <begin position="1"/>
        <end position="2"/>
    </location>
</feature>
<feature type="transmembrane region" description="Helical; Signal-anchor for type II membrane protein" evidence="3">
    <location>
        <begin position="3"/>
        <end position="23"/>
    </location>
</feature>
<feature type="topological domain" description="Lumenal" evidence="3">
    <location>
        <begin position="24"/>
        <end position="324"/>
    </location>
</feature>
<feature type="region of interest" description="Disordered" evidence="4">
    <location>
        <begin position="50"/>
        <end position="78"/>
    </location>
</feature>
<feature type="region of interest" description="Interaction with galactose moiety of substrate glycoprotein" evidence="1">
    <location>
        <begin position="235"/>
        <end position="244"/>
    </location>
</feature>
<feature type="active site" description="Proton donor/acceptor" evidence="1">
    <location>
        <position position="274"/>
    </location>
</feature>
<feature type="binding site" evidence="1">
    <location>
        <begin position="88"/>
        <end position="90"/>
    </location>
    <ligand>
        <name>UDP-alpha-D-glucuronate</name>
        <dbReference type="ChEBI" id="CHEBI:58052"/>
    </ligand>
</feature>
<feature type="binding site" evidence="1">
    <location>
        <position position="119"/>
    </location>
    <ligand>
        <name>UDP-alpha-D-glucuronate</name>
        <dbReference type="ChEBI" id="CHEBI:58052"/>
    </ligand>
</feature>
<feature type="binding site" evidence="1">
    <location>
        <position position="156"/>
    </location>
    <ligand>
        <name>UDP-alpha-D-glucuronate</name>
        <dbReference type="ChEBI" id="CHEBI:58052"/>
    </ligand>
</feature>
<feature type="binding site" evidence="1">
    <location>
        <position position="161"/>
    </location>
    <ligand>
        <name>UDP-alpha-D-glucuronate</name>
        <dbReference type="ChEBI" id="CHEBI:58052"/>
    </ligand>
</feature>
<feature type="binding site" evidence="1">
    <location>
        <begin position="186"/>
        <end position="188"/>
    </location>
    <ligand>
        <name>UDP-alpha-D-glucuronate</name>
        <dbReference type="ChEBI" id="CHEBI:58052"/>
    </ligand>
</feature>
<feature type="binding site" evidence="1">
    <location>
        <position position="188"/>
    </location>
    <ligand>
        <name>Mn(2+)</name>
        <dbReference type="ChEBI" id="CHEBI:29035"/>
    </ligand>
</feature>
<feature type="binding site" evidence="1">
    <location>
        <begin position="301"/>
        <end position="303"/>
    </location>
    <ligand>
        <name>UDP-alpha-D-glucuronate</name>
        <dbReference type="ChEBI" id="CHEBI:58052"/>
    </ligand>
</feature>
<feature type="site" description="Interaction with galactose moiety of substrate glycoprotein" evidence="1">
    <location>
        <position position="219"/>
    </location>
</feature>
<feature type="site" description="Interaction with galactose moiety of substrate glycoprotein" evidence="1">
    <location>
        <position position="311"/>
    </location>
</feature>
<feature type="glycosylation site" description="N-linked (GlcNAc...) asparagine" evidence="3">
    <location>
        <position position="68"/>
    </location>
</feature>
<feature type="glycosylation site" description="N-linked (GlcNAc...) asparagine" evidence="3">
    <location>
        <position position="293"/>
    </location>
</feature>
<feature type="splice variant" id="VSP_001796" description="In isoform 2." evidence="5">
    <original>FAVSLQVILSNPKAVFKRRGSQPGMQESDFLKQITTVEELEPKASNCTKVLVWHT</original>
    <variation>EQNAWDICPCRMGPRRNWERPIFIKPLSVLHSSEEILIFKIGSLMVQVEVDFRSG</variation>
    <location>
        <begin position="248"/>
        <end position="302"/>
    </location>
</feature>
<feature type="splice variant" id="VSP_001797" description="In isoform 2." evidence="5">
    <location>
        <begin position="303"/>
        <end position="324"/>
    </location>
</feature>
<feature type="sequence conflict" description="In Ref. 1; BAC20343." evidence="6" ref="1">
    <original>A</original>
    <variation>V</variation>
    <location>
        <position position="291"/>
    </location>
</feature>
<gene>
    <name type="primary">B3gat2</name>
    <name type="synonym">Glcats</name>
</gene>
<proteinExistence type="evidence at transcript level"/>